<comment type="function">
    <text evidence="2">Component of the ubiquinol-cytochrome c reductase complex (complex III or cytochrome b-c1 complex) that is part of the mitochondrial respiratory chain. The b-c1 complex mediates electron transfer from ubiquinol to cytochrome c. Contributes to the generation of a proton gradient across the mitochondrial membrane that is then used for ATP synthesis.</text>
</comment>
<comment type="cofactor">
    <cofactor evidence="2">
        <name>heme b</name>
        <dbReference type="ChEBI" id="CHEBI:60344"/>
    </cofactor>
    <text evidence="2">Binds 2 heme b groups non-covalently.</text>
</comment>
<comment type="subunit">
    <text evidence="2">The cytochrome bc1 complex contains 3 respiratory subunits (MT-CYB, CYC1 and UQCRFS1), 2 core proteins (UQCRC1 and UQCRC2) and probably 6 low-molecular weight proteins.</text>
</comment>
<comment type="subcellular location">
    <subcellularLocation>
        <location evidence="2">Mitochondrion inner membrane</location>
        <topology evidence="2">Multi-pass membrane protein</topology>
    </subcellularLocation>
</comment>
<comment type="miscellaneous">
    <text evidence="1">Heme 1 (or BL or b562) is low-potential and absorbs at about 562 nm, and heme 2 (or BH or b566) is high-potential and absorbs at about 566 nm.</text>
</comment>
<comment type="similarity">
    <text evidence="3 4">Belongs to the cytochrome b family.</text>
</comment>
<comment type="caution">
    <text evidence="2">The full-length protein contains only eight transmembrane helices, not nine as predicted by bioinformatics tools.</text>
</comment>
<organism>
    <name type="scientific">Laticauda colubrina</name>
    <name type="common">Yellow-lipped sea krait</name>
    <name type="synonym">Banded sea krait</name>
    <dbReference type="NCBI Taxonomy" id="8628"/>
    <lineage>
        <taxon>Eukaryota</taxon>
        <taxon>Metazoa</taxon>
        <taxon>Chordata</taxon>
        <taxon>Craniata</taxon>
        <taxon>Vertebrata</taxon>
        <taxon>Euteleostomi</taxon>
        <taxon>Lepidosauria</taxon>
        <taxon>Squamata</taxon>
        <taxon>Bifurcata</taxon>
        <taxon>Unidentata</taxon>
        <taxon>Episquamata</taxon>
        <taxon>Toxicofera</taxon>
        <taxon>Serpentes</taxon>
        <taxon>Colubroidea</taxon>
        <taxon>Elapidae</taxon>
        <taxon>Laticaudinae</taxon>
        <taxon>Laticauda</taxon>
    </lineage>
</organism>
<reference key="1">
    <citation type="journal article" date="2000" name="Mol. Phylogenet. Evol.">
        <title>Phylogenetic relationships of elapid snakes based on cytochrome b mtDNA sequences.</title>
        <authorList>
            <person name="Slowinski J.B."/>
            <person name="Keogh J.S."/>
        </authorList>
    </citation>
    <scope>NUCLEOTIDE SEQUENCE [GENOMIC DNA]</scope>
</reference>
<dbReference type="EMBL" id="AF217834">
    <property type="protein sequence ID" value="AAF37253.1"/>
    <property type="molecule type" value="Genomic_DNA"/>
</dbReference>
<dbReference type="SMR" id="Q9MLJ4"/>
<dbReference type="GO" id="GO:0005743">
    <property type="term" value="C:mitochondrial inner membrane"/>
    <property type="evidence" value="ECO:0007669"/>
    <property type="project" value="UniProtKB-SubCell"/>
</dbReference>
<dbReference type="GO" id="GO:0045275">
    <property type="term" value="C:respiratory chain complex III"/>
    <property type="evidence" value="ECO:0007669"/>
    <property type="project" value="InterPro"/>
</dbReference>
<dbReference type="GO" id="GO:0046872">
    <property type="term" value="F:metal ion binding"/>
    <property type="evidence" value="ECO:0007669"/>
    <property type="project" value="UniProtKB-KW"/>
</dbReference>
<dbReference type="GO" id="GO:0008121">
    <property type="term" value="F:ubiquinol-cytochrome-c reductase activity"/>
    <property type="evidence" value="ECO:0007669"/>
    <property type="project" value="InterPro"/>
</dbReference>
<dbReference type="GO" id="GO:0006122">
    <property type="term" value="P:mitochondrial electron transport, ubiquinol to cytochrome c"/>
    <property type="evidence" value="ECO:0007669"/>
    <property type="project" value="TreeGrafter"/>
</dbReference>
<dbReference type="CDD" id="cd00290">
    <property type="entry name" value="cytochrome_b_C"/>
    <property type="match status" value="1"/>
</dbReference>
<dbReference type="CDD" id="cd00284">
    <property type="entry name" value="Cytochrome_b_N"/>
    <property type="match status" value="1"/>
</dbReference>
<dbReference type="Gene3D" id="1.20.810.10">
    <property type="entry name" value="Cytochrome Bc1 Complex, Chain C"/>
    <property type="match status" value="1"/>
</dbReference>
<dbReference type="InterPro" id="IPR005798">
    <property type="entry name" value="Cyt_b/b6_C"/>
</dbReference>
<dbReference type="InterPro" id="IPR036150">
    <property type="entry name" value="Cyt_b/b6_C_sf"/>
</dbReference>
<dbReference type="InterPro" id="IPR005797">
    <property type="entry name" value="Cyt_b/b6_N"/>
</dbReference>
<dbReference type="InterPro" id="IPR027387">
    <property type="entry name" value="Cytb/b6-like_sf"/>
</dbReference>
<dbReference type="InterPro" id="IPR030689">
    <property type="entry name" value="Cytochrome_b"/>
</dbReference>
<dbReference type="InterPro" id="IPR048260">
    <property type="entry name" value="Cytochrome_b_C_euk/bac"/>
</dbReference>
<dbReference type="InterPro" id="IPR048259">
    <property type="entry name" value="Cytochrome_b_N_euk/bac"/>
</dbReference>
<dbReference type="InterPro" id="IPR016174">
    <property type="entry name" value="Di-haem_cyt_TM"/>
</dbReference>
<dbReference type="PANTHER" id="PTHR19271">
    <property type="entry name" value="CYTOCHROME B"/>
    <property type="match status" value="1"/>
</dbReference>
<dbReference type="PANTHER" id="PTHR19271:SF16">
    <property type="entry name" value="CYTOCHROME B"/>
    <property type="match status" value="1"/>
</dbReference>
<dbReference type="Pfam" id="PF00032">
    <property type="entry name" value="Cytochrom_B_C"/>
    <property type="match status" value="1"/>
</dbReference>
<dbReference type="Pfam" id="PF00033">
    <property type="entry name" value="Cytochrome_B"/>
    <property type="match status" value="1"/>
</dbReference>
<dbReference type="PIRSF" id="PIRSF038885">
    <property type="entry name" value="COB"/>
    <property type="match status" value="1"/>
</dbReference>
<dbReference type="SUPFAM" id="SSF81648">
    <property type="entry name" value="a domain/subunit of cytochrome bc1 complex (Ubiquinol-cytochrome c reductase)"/>
    <property type="match status" value="1"/>
</dbReference>
<dbReference type="SUPFAM" id="SSF81342">
    <property type="entry name" value="Transmembrane di-heme cytochromes"/>
    <property type="match status" value="1"/>
</dbReference>
<dbReference type="PROSITE" id="PS51003">
    <property type="entry name" value="CYTB_CTER"/>
    <property type="match status" value="1"/>
</dbReference>
<dbReference type="PROSITE" id="PS51002">
    <property type="entry name" value="CYTB_NTER"/>
    <property type="match status" value="1"/>
</dbReference>
<geneLocation type="mitochondrion"/>
<name>CYB_LATCO</name>
<gene>
    <name type="primary">MT-CYB</name>
    <name type="synonym">COB</name>
    <name type="synonym">CYTB</name>
    <name type="synonym">MTCYB</name>
</gene>
<evidence type="ECO:0000250" key="1"/>
<evidence type="ECO:0000250" key="2">
    <source>
        <dbReference type="UniProtKB" id="P00157"/>
    </source>
</evidence>
<evidence type="ECO:0000255" key="3">
    <source>
        <dbReference type="PROSITE-ProRule" id="PRU00967"/>
    </source>
</evidence>
<evidence type="ECO:0000255" key="4">
    <source>
        <dbReference type="PROSITE-ProRule" id="PRU00968"/>
    </source>
</evidence>
<proteinExistence type="inferred from homology"/>
<protein>
    <recommendedName>
        <fullName>Cytochrome b</fullName>
    </recommendedName>
    <alternativeName>
        <fullName>Complex III subunit 3</fullName>
    </alternativeName>
    <alternativeName>
        <fullName>Complex III subunit III</fullName>
    </alternativeName>
    <alternativeName>
        <fullName>Cytochrome b-c1 complex subunit 3</fullName>
    </alternativeName>
    <alternativeName>
        <fullName>Ubiquinol-cytochrome-c reductase complex cytochrome b subunit</fullName>
    </alternativeName>
</protein>
<feature type="chain" id="PRO_0000061093" description="Cytochrome b">
    <location>
        <begin position="1"/>
        <end position="371"/>
    </location>
</feature>
<feature type="transmembrane region" description="Helical" evidence="2">
    <location>
        <begin position="25"/>
        <end position="45"/>
    </location>
</feature>
<feature type="transmembrane region" description="Helical" evidence="2">
    <location>
        <begin position="69"/>
        <end position="90"/>
    </location>
</feature>
<feature type="transmembrane region" description="Helical" evidence="2">
    <location>
        <begin position="105"/>
        <end position="125"/>
    </location>
</feature>
<feature type="transmembrane region" description="Helical" evidence="2">
    <location>
        <begin position="170"/>
        <end position="190"/>
    </location>
</feature>
<feature type="transmembrane region" description="Helical" evidence="2">
    <location>
        <begin position="218"/>
        <end position="238"/>
    </location>
</feature>
<feature type="transmembrane region" description="Helical" evidence="2">
    <location>
        <begin position="280"/>
        <end position="300"/>
    </location>
</feature>
<feature type="transmembrane region" description="Helical" evidence="2">
    <location>
        <begin position="312"/>
        <end position="332"/>
    </location>
</feature>
<feature type="transmembrane region" description="Helical" evidence="2">
    <location>
        <begin position="339"/>
        <end position="358"/>
    </location>
</feature>
<feature type="binding site" description="axial binding residue" evidence="2">
    <location>
        <position position="75"/>
    </location>
    <ligand>
        <name>heme b</name>
        <dbReference type="ChEBI" id="CHEBI:60344"/>
        <label>b562</label>
    </ligand>
    <ligandPart>
        <name>Fe</name>
        <dbReference type="ChEBI" id="CHEBI:18248"/>
    </ligandPart>
</feature>
<feature type="binding site" description="axial binding residue" evidence="2">
    <location>
        <position position="89"/>
    </location>
    <ligand>
        <name>heme b</name>
        <dbReference type="ChEBI" id="CHEBI:60344"/>
        <label>b566</label>
    </ligand>
    <ligandPart>
        <name>Fe</name>
        <dbReference type="ChEBI" id="CHEBI:18248"/>
    </ligandPart>
</feature>
<feature type="binding site" description="axial binding residue" evidence="2">
    <location>
        <position position="174"/>
    </location>
    <ligand>
        <name>heme b</name>
        <dbReference type="ChEBI" id="CHEBI:60344"/>
        <label>b562</label>
    </ligand>
    <ligandPart>
        <name>Fe</name>
        <dbReference type="ChEBI" id="CHEBI:18248"/>
    </ligandPart>
</feature>
<feature type="binding site" description="axial binding residue" evidence="2">
    <location>
        <position position="188"/>
    </location>
    <ligand>
        <name>heme b</name>
        <dbReference type="ChEBI" id="CHEBI:60344"/>
        <label>b566</label>
    </ligand>
    <ligandPart>
        <name>Fe</name>
        <dbReference type="ChEBI" id="CHEBI:18248"/>
    </ligandPart>
</feature>
<feature type="binding site" evidence="2">
    <location>
        <position position="193"/>
    </location>
    <ligand>
        <name>a ubiquinone</name>
        <dbReference type="ChEBI" id="CHEBI:16389"/>
    </ligand>
</feature>
<accession>Q9MLJ4</accession>
<sequence length="371" mass="41947">MSNQHTLLISNLLPVGSNISTWWNFGSMLLSCLFLQTTTGFFLAIHYTANINLAFSSVIHITRDVPYGWIMQNTHAISASAFFICIYIHIARGLYYGSYLNKGVWLTGVALLTTLMATAFFGYVLPWGQMSFWAATVITNLLTAIPYLGTSLTTWLWGGFSINDPTLTRFFALHFILPFLIISLSSIHIIMLHNEGSSNPLGTNSDIDKIPFHPYHSYKDLLMFITLMTMLLLTLSFMPNLFNDPENFSKANPLITPQHIKPEWYFLFAYGILRSIPNKLGGALALTMSIIILTTAPFTHTSYTRSMTFRPLAQTLFWTLIATFITITWAATKPIEPPFLLISQTTAILYFSFFIMNPVLGLVENMMMKYN</sequence>
<keyword id="KW-0249">Electron transport</keyword>
<keyword id="KW-0349">Heme</keyword>
<keyword id="KW-0408">Iron</keyword>
<keyword id="KW-0472">Membrane</keyword>
<keyword id="KW-0479">Metal-binding</keyword>
<keyword id="KW-0496">Mitochondrion</keyword>
<keyword id="KW-0999">Mitochondrion inner membrane</keyword>
<keyword id="KW-0679">Respiratory chain</keyword>
<keyword id="KW-0812">Transmembrane</keyword>
<keyword id="KW-1133">Transmembrane helix</keyword>
<keyword id="KW-0813">Transport</keyword>
<keyword id="KW-0830">Ubiquinone</keyword>